<gene>
    <name evidence="1" type="primary">psbN</name>
</gene>
<comment type="function">
    <text evidence="1">May play a role in photosystem I and II biogenesis.</text>
</comment>
<comment type="subcellular location">
    <subcellularLocation>
        <location evidence="1">Plastid</location>
        <location evidence="1">Chloroplast thylakoid membrane</location>
        <topology evidence="1">Single-pass membrane protein</topology>
    </subcellularLocation>
</comment>
<comment type="similarity">
    <text evidence="1">Belongs to the PsbN family.</text>
</comment>
<comment type="caution">
    <text evidence="1">Originally thought to be a component of PSII; based on experiments in Synechocystis, N.tabacum and barley, and its absence from PSII in T.elongatus and T.vulcanus, this is probably not true.</text>
</comment>
<evidence type="ECO:0000255" key="1">
    <source>
        <dbReference type="HAMAP-Rule" id="MF_00293"/>
    </source>
</evidence>
<reference key="1">
    <citation type="submission" date="2007-06" db="EMBL/GenBank/DDBJ databases">
        <title>Phylogeny and diversification of the rosids inferred from nuclear and plastid genes.</title>
        <authorList>
            <person name="Wang H."/>
            <person name="Moore M.J."/>
            <person name="Bell C.D."/>
            <person name="Soltis P.S."/>
            <person name="Soltis D.E."/>
        </authorList>
    </citation>
    <scope>NUCLEOTIDE SEQUENCE [GENOMIC DNA]</scope>
</reference>
<reference key="2">
    <citation type="journal article" date="2008" name="Nature">
        <title>The draft genome of the transgenic tropical fruit tree papaya (Carica papaya Linnaeus).</title>
        <authorList>
            <person name="Ming R."/>
            <person name="Hou S."/>
            <person name="Feng Y."/>
            <person name="Yu Q."/>
            <person name="Dionne-Laporte A."/>
            <person name="Saw J.H."/>
            <person name="Senin P."/>
            <person name="Wang W."/>
            <person name="Ly B.V."/>
            <person name="Lewis K.L."/>
            <person name="Salzberg S.L."/>
            <person name="Feng L."/>
            <person name="Jones M.R."/>
            <person name="Skelton R.L."/>
            <person name="Murray J.E."/>
            <person name="Chen C."/>
            <person name="Qian W."/>
            <person name="Shen J."/>
            <person name="Du P."/>
            <person name="Eustice M."/>
            <person name="Tong E."/>
            <person name="Tang H."/>
            <person name="Lyons E."/>
            <person name="Paull R.E."/>
            <person name="Michael T.P."/>
            <person name="Wall K."/>
            <person name="Rice D.W."/>
            <person name="Albert H."/>
            <person name="Wang M.L."/>
            <person name="Zhu Y.J."/>
            <person name="Schatz M."/>
            <person name="Nagarajan N."/>
            <person name="Acob R.A."/>
            <person name="Guan P."/>
            <person name="Blas A."/>
            <person name="Wai C.M."/>
            <person name="Ackerman C.M."/>
            <person name="Ren Y."/>
            <person name="Liu C."/>
            <person name="Wang J."/>
            <person name="Wang J."/>
            <person name="Na J.K."/>
            <person name="Shakirov E.V."/>
            <person name="Haas B."/>
            <person name="Thimmapuram J."/>
            <person name="Nelson D."/>
            <person name="Wang X."/>
            <person name="Bowers J.E."/>
            <person name="Gschwend A.R."/>
            <person name="Delcher A.L."/>
            <person name="Singh R."/>
            <person name="Suzuki J.Y."/>
            <person name="Tripathi S."/>
            <person name="Neupane K."/>
            <person name="Wei H."/>
            <person name="Irikura B."/>
            <person name="Paidi M."/>
            <person name="Jiang N."/>
            <person name="Zhang W."/>
            <person name="Presting G."/>
            <person name="Windsor A."/>
            <person name="Navajas-Perez R."/>
            <person name="Torres M.J."/>
            <person name="Feltus F.A."/>
            <person name="Porter B."/>
            <person name="Li Y."/>
            <person name="Burroughs A.M."/>
            <person name="Luo M.C."/>
            <person name="Liu L."/>
            <person name="Christopher D.A."/>
            <person name="Mount S.M."/>
            <person name="Moore P.H."/>
            <person name="Sugimura T."/>
            <person name="Jiang J."/>
            <person name="Schuler M.A."/>
            <person name="Friedman V."/>
            <person name="Mitchell-Olds T."/>
            <person name="Shippen D.E."/>
            <person name="dePamphilis C.W."/>
            <person name="Palmer J.D."/>
            <person name="Freeling M."/>
            <person name="Paterson A.H."/>
            <person name="Gonsalves D."/>
            <person name="Wang L."/>
            <person name="Alam M."/>
        </authorList>
    </citation>
    <scope>NUCLEOTIDE SEQUENCE [LARGE SCALE GENOMIC DNA]</scope>
    <source>
        <strain>cv. SunUp</strain>
    </source>
</reference>
<name>PSBN_CARPA</name>
<dbReference type="EMBL" id="EU002392">
    <property type="protein sequence ID" value="ABV65411.1"/>
    <property type="molecule type" value="Genomic_DNA"/>
</dbReference>
<dbReference type="EMBL" id="EU431223">
    <property type="protein sequence ID" value="ABY86811.1"/>
    <property type="molecule type" value="Genomic_DNA"/>
</dbReference>
<dbReference type="RefSeq" id="YP_001671711.1">
    <property type="nucleotide sequence ID" value="NC_010323.1"/>
</dbReference>
<dbReference type="SMR" id="A9XVA1"/>
<dbReference type="GeneID" id="5878422"/>
<dbReference type="KEGG" id="cpap:5878422"/>
<dbReference type="OrthoDB" id="1860403at2759"/>
<dbReference type="GO" id="GO:0009535">
    <property type="term" value="C:chloroplast thylakoid membrane"/>
    <property type="evidence" value="ECO:0007669"/>
    <property type="project" value="UniProtKB-SubCell"/>
</dbReference>
<dbReference type="GO" id="GO:0015979">
    <property type="term" value="P:photosynthesis"/>
    <property type="evidence" value="ECO:0007669"/>
    <property type="project" value="InterPro"/>
</dbReference>
<dbReference type="HAMAP" id="MF_00293">
    <property type="entry name" value="PSII_PsbN"/>
    <property type="match status" value="1"/>
</dbReference>
<dbReference type="InterPro" id="IPR003398">
    <property type="entry name" value="PSII_PsbN"/>
</dbReference>
<dbReference type="PANTHER" id="PTHR35326">
    <property type="entry name" value="PROTEIN PSBN"/>
    <property type="match status" value="1"/>
</dbReference>
<dbReference type="PANTHER" id="PTHR35326:SF3">
    <property type="entry name" value="PROTEIN PSBN"/>
    <property type="match status" value="1"/>
</dbReference>
<dbReference type="Pfam" id="PF02468">
    <property type="entry name" value="PsbN"/>
    <property type="match status" value="1"/>
</dbReference>
<feature type="chain" id="PRO_0000362181" description="Protein PsbN">
    <location>
        <begin position="1"/>
        <end position="43"/>
    </location>
</feature>
<feature type="transmembrane region" description="Helical" evidence="1">
    <location>
        <begin position="5"/>
        <end position="27"/>
    </location>
</feature>
<sequence>METATLVAISISGLLVSFTGYALYTAFGQPSQQLRDPFEEHGD</sequence>
<geneLocation type="chloroplast"/>
<keyword id="KW-0150">Chloroplast</keyword>
<keyword id="KW-0472">Membrane</keyword>
<keyword id="KW-0934">Plastid</keyword>
<keyword id="KW-0793">Thylakoid</keyword>
<keyword id="KW-0812">Transmembrane</keyword>
<keyword id="KW-1133">Transmembrane helix</keyword>
<organism>
    <name type="scientific">Carica papaya</name>
    <name type="common">Papaya</name>
    <dbReference type="NCBI Taxonomy" id="3649"/>
    <lineage>
        <taxon>Eukaryota</taxon>
        <taxon>Viridiplantae</taxon>
        <taxon>Streptophyta</taxon>
        <taxon>Embryophyta</taxon>
        <taxon>Tracheophyta</taxon>
        <taxon>Spermatophyta</taxon>
        <taxon>Magnoliopsida</taxon>
        <taxon>eudicotyledons</taxon>
        <taxon>Gunneridae</taxon>
        <taxon>Pentapetalae</taxon>
        <taxon>rosids</taxon>
        <taxon>malvids</taxon>
        <taxon>Brassicales</taxon>
        <taxon>Caricaceae</taxon>
        <taxon>Carica</taxon>
    </lineage>
</organism>
<accession>A9XVA1</accession>
<protein>
    <recommendedName>
        <fullName evidence="1">Protein PsbN</fullName>
    </recommendedName>
</protein>
<proteinExistence type="inferred from homology"/>